<accession>B5RFK2</accession>
<gene>
    <name evidence="1" type="primary">rplL</name>
    <name type="ordered locus">SG3455</name>
</gene>
<proteinExistence type="inferred from homology"/>
<keyword id="KW-0687">Ribonucleoprotein</keyword>
<keyword id="KW-0689">Ribosomal protein</keyword>
<reference key="1">
    <citation type="journal article" date="2008" name="Genome Res.">
        <title>Comparative genome analysis of Salmonella enteritidis PT4 and Salmonella gallinarum 287/91 provides insights into evolutionary and host adaptation pathways.</title>
        <authorList>
            <person name="Thomson N.R."/>
            <person name="Clayton D.J."/>
            <person name="Windhorst D."/>
            <person name="Vernikos G."/>
            <person name="Davidson S."/>
            <person name="Churcher C."/>
            <person name="Quail M.A."/>
            <person name="Stevens M."/>
            <person name="Jones M.A."/>
            <person name="Watson M."/>
            <person name="Barron A."/>
            <person name="Layton A."/>
            <person name="Pickard D."/>
            <person name="Kingsley R.A."/>
            <person name="Bignell A."/>
            <person name="Clark L."/>
            <person name="Harris B."/>
            <person name="Ormond D."/>
            <person name="Abdellah Z."/>
            <person name="Brooks K."/>
            <person name="Cherevach I."/>
            <person name="Chillingworth T."/>
            <person name="Woodward J."/>
            <person name="Norberczak H."/>
            <person name="Lord A."/>
            <person name="Arrowsmith C."/>
            <person name="Jagels K."/>
            <person name="Moule S."/>
            <person name="Mungall K."/>
            <person name="Saunders M."/>
            <person name="Whitehead S."/>
            <person name="Chabalgoity J.A."/>
            <person name="Maskell D."/>
            <person name="Humphreys T."/>
            <person name="Roberts M."/>
            <person name="Barrow P.A."/>
            <person name="Dougan G."/>
            <person name="Parkhill J."/>
        </authorList>
    </citation>
    <scope>NUCLEOTIDE SEQUENCE [LARGE SCALE GENOMIC DNA]</scope>
    <source>
        <strain>287/91 / NCTC 13346</strain>
    </source>
</reference>
<comment type="function">
    <text evidence="1">Forms part of the ribosomal stalk which helps the ribosome interact with GTP-bound translation factors. Is thus essential for accurate translation.</text>
</comment>
<comment type="subunit">
    <text evidence="1">Homodimer. Part of the ribosomal stalk of the 50S ribosomal subunit. Forms a multimeric L10(L12)X complex, where L10 forms an elongated spine to which 2 to 4 L12 dimers bind in a sequential fashion. Binds GTP-bound translation factors.</text>
</comment>
<comment type="similarity">
    <text evidence="1">Belongs to the bacterial ribosomal protein bL12 family.</text>
</comment>
<feature type="chain" id="PRO_1000121484" description="Large ribosomal subunit protein bL12">
    <location>
        <begin position="1"/>
        <end position="121"/>
    </location>
</feature>
<sequence>MSITKDQIIEAVSAMSVMDVVELISAMEEKFGVSAAAAVAVAAGPAEAAEEKTEFDVILKAAGANKVAVIKAVRGATGLGLKEAKDLVESAPAALKEGVSKDDAEALKKSLEEAGAEVEVK</sequence>
<name>RL7_SALG2</name>
<protein>
    <recommendedName>
        <fullName evidence="1">Large ribosomal subunit protein bL12</fullName>
    </recommendedName>
    <alternativeName>
        <fullName evidence="2">50S ribosomal protein L7/L12</fullName>
    </alternativeName>
</protein>
<dbReference type="EMBL" id="AM933173">
    <property type="protein sequence ID" value="CAR39245.1"/>
    <property type="molecule type" value="Genomic_DNA"/>
</dbReference>
<dbReference type="RefSeq" id="WP_000028882.1">
    <property type="nucleotide sequence ID" value="NC_011274.1"/>
</dbReference>
<dbReference type="SMR" id="B5RFK2"/>
<dbReference type="GeneID" id="89551069"/>
<dbReference type="KEGG" id="seg:SG3455"/>
<dbReference type="HOGENOM" id="CLU_086499_3_2_6"/>
<dbReference type="Proteomes" id="UP000008321">
    <property type="component" value="Chromosome"/>
</dbReference>
<dbReference type="GO" id="GO:0022625">
    <property type="term" value="C:cytosolic large ribosomal subunit"/>
    <property type="evidence" value="ECO:0007669"/>
    <property type="project" value="TreeGrafter"/>
</dbReference>
<dbReference type="GO" id="GO:0003729">
    <property type="term" value="F:mRNA binding"/>
    <property type="evidence" value="ECO:0007669"/>
    <property type="project" value="TreeGrafter"/>
</dbReference>
<dbReference type="GO" id="GO:0003735">
    <property type="term" value="F:structural constituent of ribosome"/>
    <property type="evidence" value="ECO:0007669"/>
    <property type="project" value="InterPro"/>
</dbReference>
<dbReference type="GO" id="GO:0006412">
    <property type="term" value="P:translation"/>
    <property type="evidence" value="ECO:0007669"/>
    <property type="project" value="UniProtKB-UniRule"/>
</dbReference>
<dbReference type="CDD" id="cd00387">
    <property type="entry name" value="Ribosomal_L7_L12"/>
    <property type="match status" value="1"/>
</dbReference>
<dbReference type="FunFam" id="1.20.5.710:FF:000001">
    <property type="entry name" value="50S ribosomal protein L7/L12"/>
    <property type="match status" value="1"/>
</dbReference>
<dbReference type="FunFam" id="3.30.1390.10:FF:000001">
    <property type="entry name" value="50S ribosomal protein L7/L12"/>
    <property type="match status" value="1"/>
</dbReference>
<dbReference type="Gene3D" id="3.30.1390.10">
    <property type="match status" value="1"/>
</dbReference>
<dbReference type="Gene3D" id="1.20.5.710">
    <property type="entry name" value="Single helix bin"/>
    <property type="match status" value="1"/>
</dbReference>
<dbReference type="HAMAP" id="MF_00368">
    <property type="entry name" value="Ribosomal_bL12"/>
    <property type="match status" value="1"/>
</dbReference>
<dbReference type="InterPro" id="IPR000206">
    <property type="entry name" value="Ribosomal_bL12"/>
</dbReference>
<dbReference type="InterPro" id="IPR013823">
    <property type="entry name" value="Ribosomal_bL12_C"/>
</dbReference>
<dbReference type="InterPro" id="IPR014719">
    <property type="entry name" value="Ribosomal_bL12_C/ClpS-like"/>
</dbReference>
<dbReference type="InterPro" id="IPR008932">
    <property type="entry name" value="Ribosomal_bL12_oligo"/>
</dbReference>
<dbReference type="InterPro" id="IPR036235">
    <property type="entry name" value="Ribosomal_bL12_oligo_N_sf"/>
</dbReference>
<dbReference type="NCBIfam" id="TIGR00855">
    <property type="entry name" value="L12"/>
    <property type="match status" value="1"/>
</dbReference>
<dbReference type="PANTHER" id="PTHR45987">
    <property type="entry name" value="39S RIBOSOMAL PROTEIN L12"/>
    <property type="match status" value="1"/>
</dbReference>
<dbReference type="PANTHER" id="PTHR45987:SF4">
    <property type="entry name" value="LARGE RIBOSOMAL SUBUNIT PROTEIN BL12M"/>
    <property type="match status" value="1"/>
</dbReference>
<dbReference type="Pfam" id="PF00542">
    <property type="entry name" value="Ribosomal_L12"/>
    <property type="match status" value="1"/>
</dbReference>
<dbReference type="Pfam" id="PF16320">
    <property type="entry name" value="Ribosomal_L12_N"/>
    <property type="match status" value="1"/>
</dbReference>
<dbReference type="SUPFAM" id="SSF54736">
    <property type="entry name" value="ClpS-like"/>
    <property type="match status" value="1"/>
</dbReference>
<dbReference type="SUPFAM" id="SSF48300">
    <property type="entry name" value="Ribosomal protein L7/12, oligomerisation (N-terminal) domain"/>
    <property type="match status" value="1"/>
</dbReference>
<organism>
    <name type="scientific">Salmonella gallinarum (strain 287/91 / NCTC 13346)</name>
    <dbReference type="NCBI Taxonomy" id="550538"/>
    <lineage>
        <taxon>Bacteria</taxon>
        <taxon>Pseudomonadati</taxon>
        <taxon>Pseudomonadota</taxon>
        <taxon>Gammaproteobacteria</taxon>
        <taxon>Enterobacterales</taxon>
        <taxon>Enterobacteriaceae</taxon>
        <taxon>Salmonella</taxon>
    </lineage>
</organism>
<evidence type="ECO:0000255" key="1">
    <source>
        <dbReference type="HAMAP-Rule" id="MF_00368"/>
    </source>
</evidence>
<evidence type="ECO:0000305" key="2"/>